<feature type="chain" id="PRO_0000132198" description="Small ribosomal subunit protein uS13c">
    <location>
        <begin position="1"/>
        <end position="126"/>
    </location>
</feature>
<feature type="region of interest" description="Disordered" evidence="2">
    <location>
        <begin position="95"/>
        <end position="126"/>
    </location>
</feature>
<feature type="compositionally biased region" description="Basic residues" evidence="2">
    <location>
        <begin position="107"/>
        <end position="126"/>
    </location>
</feature>
<sequence>MTRIVGVDLPKNKRIEISLTYIYGIGKSKAIEILEQLKINRNIKTKELKDEQIVLIRQILNNSYQIEGDLKRVESMNIKRLMTISSYRGKRHQLGLPLRGQNTRTNARTKRGIKKTMAGKKKAPRK</sequence>
<name>RR13_GRATL</name>
<gene>
    <name evidence="1" type="primary">rps13</name>
    <name type="ordered locus">Grc000082</name>
</gene>
<protein>
    <recommendedName>
        <fullName evidence="1">Small ribosomal subunit protein uS13c</fullName>
    </recommendedName>
    <alternativeName>
        <fullName evidence="3">30S ribosomal protein S13, chloroplastic</fullName>
    </alternativeName>
</protein>
<geneLocation type="chloroplast"/>
<evidence type="ECO:0000255" key="1">
    <source>
        <dbReference type="HAMAP-Rule" id="MF_01315"/>
    </source>
</evidence>
<evidence type="ECO:0000256" key="2">
    <source>
        <dbReference type="SAM" id="MobiDB-lite"/>
    </source>
</evidence>
<evidence type="ECO:0000305" key="3"/>
<organism>
    <name type="scientific">Gracilaria tenuistipitata var. liui</name>
    <name type="common">Red alga</name>
    <dbReference type="NCBI Taxonomy" id="285951"/>
    <lineage>
        <taxon>Eukaryota</taxon>
        <taxon>Rhodophyta</taxon>
        <taxon>Florideophyceae</taxon>
        <taxon>Rhodymeniophycidae</taxon>
        <taxon>Gracilariales</taxon>
        <taxon>Gracilariaceae</taxon>
        <taxon>Gracilaria</taxon>
        <taxon>Gracilaria tenuistipitata</taxon>
    </lineage>
</organism>
<keyword id="KW-0150">Chloroplast</keyword>
<keyword id="KW-0934">Plastid</keyword>
<keyword id="KW-0687">Ribonucleoprotein</keyword>
<keyword id="KW-0689">Ribosomal protein</keyword>
<keyword id="KW-0694">RNA-binding</keyword>
<keyword id="KW-0699">rRNA-binding</keyword>
<comment type="function">
    <text evidence="1">Located at the top of the head of the 30S subunit, it contacts several helices of the 16S rRNA.</text>
</comment>
<comment type="subunit">
    <text>Part of the 30S ribosomal subunit.</text>
</comment>
<comment type="subcellular location">
    <subcellularLocation>
        <location>Plastid</location>
        <location>Chloroplast</location>
    </subcellularLocation>
</comment>
<comment type="similarity">
    <text evidence="1">Belongs to the universal ribosomal protein uS13 family.</text>
</comment>
<dbReference type="EMBL" id="AY673996">
    <property type="protein sequence ID" value="AAT79663.1"/>
    <property type="molecule type" value="Genomic_DNA"/>
</dbReference>
<dbReference type="RefSeq" id="YP_063588.1">
    <property type="nucleotide sequence ID" value="NC_006137.1"/>
</dbReference>
<dbReference type="SMR" id="Q6B8X2"/>
<dbReference type="GeneID" id="2944020"/>
<dbReference type="GO" id="GO:0009507">
    <property type="term" value="C:chloroplast"/>
    <property type="evidence" value="ECO:0007669"/>
    <property type="project" value="UniProtKB-SubCell"/>
</dbReference>
<dbReference type="GO" id="GO:0005829">
    <property type="term" value="C:cytosol"/>
    <property type="evidence" value="ECO:0007669"/>
    <property type="project" value="TreeGrafter"/>
</dbReference>
<dbReference type="GO" id="GO:0015935">
    <property type="term" value="C:small ribosomal subunit"/>
    <property type="evidence" value="ECO:0007669"/>
    <property type="project" value="TreeGrafter"/>
</dbReference>
<dbReference type="GO" id="GO:0019843">
    <property type="term" value="F:rRNA binding"/>
    <property type="evidence" value="ECO:0007669"/>
    <property type="project" value="UniProtKB-UniRule"/>
</dbReference>
<dbReference type="GO" id="GO:0003735">
    <property type="term" value="F:structural constituent of ribosome"/>
    <property type="evidence" value="ECO:0007669"/>
    <property type="project" value="InterPro"/>
</dbReference>
<dbReference type="GO" id="GO:0006412">
    <property type="term" value="P:translation"/>
    <property type="evidence" value="ECO:0007669"/>
    <property type="project" value="UniProtKB-UniRule"/>
</dbReference>
<dbReference type="FunFam" id="1.10.8.50:FF:000001">
    <property type="entry name" value="30S ribosomal protein S13"/>
    <property type="match status" value="1"/>
</dbReference>
<dbReference type="Gene3D" id="1.10.8.50">
    <property type="match status" value="1"/>
</dbReference>
<dbReference type="Gene3D" id="4.10.910.10">
    <property type="entry name" value="30s ribosomal protein s13, domain 2"/>
    <property type="match status" value="1"/>
</dbReference>
<dbReference type="HAMAP" id="MF_01315">
    <property type="entry name" value="Ribosomal_uS13"/>
    <property type="match status" value="1"/>
</dbReference>
<dbReference type="InterPro" id="IPR027437">
    <property type="entry name" value="Rbsml_uS13_C"/>
</dbReference>
<dbReference type="InterPro" id="IPR001892">
    <property type="entry name" value="Ribosomal_uS13"/>
</dbReference>
<dbReference type="InterPro" id="IPR010979">
    <property type="entry name" value="Ribosomal_uS13-like_H2TH"/>
</dbReference>
<dbReference type="InterPro" id="IPR019980">
    <property type="entry name" value="Ribosomal_uS13_bac-type"/>
</dbReference>
<dbReference type="InterPro" id="IPR018269">
    <property type="entry name" value="Ribosomal_uS13_CS"/>
</dbReference>
<dbReference type="NCBIfam" id="TIGR03631">
    <property type="entry name" value="uS13_bact"/>
    <property type="match status" value="1"/>
</dbReference>
<dbReference type="PANTHER" id="PTHR10871">
    <property type="entry name" value="30S RIBOSOMAL PROTEIN S13/40S RIBOSOMAL PROTEIN S18"/>
    <property type="match status" value="1"/>
</dbReference>
<dbReference type="PANTHER" id="PTHR10871:SF1">
    <property type="entry name" value="SMALL RIBOSOMAL SUBUNIT PROTEIN US13M"/>
    <property type="match status" value="1"/>
</dbReference>
<dbReference type="Pfam" id="PF00416">
    <property type="entry name" value="Ribosomal_S13"/>
    <property type="match status" value="1"/>
</dbReference>
<dbReference type="PIRSF" id="PIRSF002134">
    <property type="entry name" value="Ribosomal_S13"/>
    <property type="match status" value="1"/>
</dbReference>
<dbReference type="SUPFAM" id="SSF46946">
    <property type="entry name" value="S13-like H2TH domain"/>
    <property type="match status" value="1"/>
</dbReference>
<dbReference type="PROSITE" id="PS00646">
    <property type="entry name" value="RIBOSOMAL_S13_1"/>
    <property type="match status" value="1"/>
</dbReference>
<dbReference type="PROSITE" id="PS50159">
    <property type="entry name" value="RIBOSOMAL_S13_2"/>
    <property type="match status" value="1"/>
</dbReference>
<proteinExistence type="inferred from homology"/>
<reference key="1">
    <citation type="journal article" date="2004" name="J. Mol. Evol.">
        <title>Comparative analysis of the complete plastid genome sequence of the red alga Gracilaria tenuistipitata var. liui provides insights into the evolution of rhodoplasts and their relationship to other plastids.</title>
        <authorList>
            <person name="Hagopian J.C."/>
            <person name="Reis M."/>
            <person name="Kitajima J.P."/>
            <person name="Bhattacharya D."/>
            <person name="de Oliveira M.C."/>
        </authorList>
    </citation>
    <scope>NUCLEOTIDE SEQUENCE [LARGE SCALE GENOMIC DNA]</scope>
</reference>
<accession>Q6B8X2</accession>